<gene>
    <name type="primary">ROX3</name>
    <name type="synonym">MED19</name>
    <name type="ordered locus">YALI0E10351g</name>
</gene>
<dbReference type="EMBL" id="CR382131">
    <property type="protein sequence ID" value="CAG79367.1"/>
    <property type="molecule type" value="Genomic_DNA"/>
</dbReference>
<dbReference type="RefSeq" id="XP_503776.1">
    <property type="nucleotide sequence ID" value="XM_503776.1"/>
</dbReference>
<dbReference type="STRING" id="284591.Q6C6D6"/>
<dbReference type="EnsemblFungi" id="CAG79367">
    <property type="protein sequence ID" value="CAG79367"/>
    <property type="gene ID" value="YALI0_E10351g"/>
</dbReference>
<dbReference type="KEGG" id="yli:2912597"/>
<dbReference type="VEuPathDB" id="FungiDB:YALI0_E10351g"/>
<dbReference type="HOGENOM" id="CLU_1490141_0_0_1"/>
<dbReference type="InParanoid" id="Q6C6D6"/>
<dbReference type="OMA" id="PNYYLAD"/>
<dbReference type="OrthoDB" id="83363at4891"/>
<dbReference type="Proteomes" id="UP000001300">
    <property type="component" value="Chromosome E"/>
</dbReference>
<dbReference type="GO" id="GO:0070847">
    <property type="term" value="C:core mediator complex"/>
    <property type="evidence" value="ECO:0000318"/>
    <property type="project" value="GO_Central"/>
</dbReference>
<dbReference type="GO" id="GO:0016592">
    <property type="term" value="C:mediator complex"/>
    <property type="evidence" value="ECO:0000318"/>
    <property type="project" value="GO_Central"/>
</dbReference>
<dbReference type="GO" id="GO:0003712">
    <property type="term" value="F:transcription coregulator activity"/>
    <property type="evidence" value="ECO:0000318"/>
    <property type="project" value="GO_Central"/>
</dbReference>
<dbReference type="GO" id="GO:0006357">
    <property type="term" value="P:regulation of transcription by RNA polymerase II"/>
    <property type="evidence" value="ECO:0000318"/>
    <property type="project" value="GO_Central"/>
</dbReference>
<dbReference type="InterPro" id="IPR013942">
    <property type="entry name" value="Mediator_Med19_fun"/>
</dbReference>
<dbReference type="PANTHER" id="PTHR28270">
    <property type="entry name" value="MEDIATOR OF RNA POLYMERASE II TRANSCRIPTION SUBUNIT 19"/>
    <property type="match status" value="1"/>
</dbReference>
<dbReference type="PANTHER" id="PTHR28270:SF1">
    <property type="entry name" value="MEDIATOR OF RNA POLYMERASE II TRANSCRIPTION SUBUNIT 19"/>
    <property type="match status" value="1"/>
</dbReference>
<dbReference type="Pfam" id="PF08633">
    <property type="entry name" value="Rox3"/>
    <property type="match status" value="1"/>
</dbReference>
<sequence>MPNYYLADDTKYTRPSTSAMSNLTELCGLKGLADSMARFDPVTGEKNKLRKSYKNQLLDLTGKFDIPSQPSLVRIIRDPVLAETGGKSLSVFDRDLLSRGLDFDATPSTGIPGFNPAMLGMPGPGKPGIGPQVGGNRLLSVRRSYNTESARESSNNEETPMARRKRKGDDDTDGERRRKRK</sequence>
<organism>
    <name type="scientific">Yarrowia lipolytica (strain CLIB 122 / E 150)</name>
    <name type="common">Yeast</name>
    <name type="synonym">Candida lipolytica</name>
    <dbReference type="NCBI Taxonomy" id="284591"/>
    <lineage>
        <taxon>Eukaryota</taxon>
        <taxon>Fungi</taxon>
        <taxon>Dikarya</taxon>
        <taxon>Ascomycota</taxon>
        <taxon>Saccharomycotina</taxon>
        <taxon>Dipodascomycetes</taxon>
        <taxon>Dipodascales</taxon>
        <taxon>Dipodascales incertae sedis</taxon>
        <taxon>Yarrowia</taxon>
    </lineage>
</organism>
<accession>Q6C6D6</accession>
<reference key="1">
    <citation type="journal article" date="2004" name="Nature">
        <title>Genome evolution in yeasts.</title>
        <authorList>
            <person name="Dujon B."/>
            <person name="Sherman D."/>
            <person name="Fischer G."/>
            <person name="Durrens P."/>
            <person name="Casaregola S."/>
            <person name="Lafontaine I."/>
            <person name="de Montigny J."/>
            <person name="Marck C."/>
            <person name="Neuveglise C."/>
            <person name="Talla E."/>
            <person name="Goffard N."/>
            <person name="Frangeul L."/>
            <person name="Aigle M."/>
            <person name="Anthouard V."/>
            <person name="Babour A."/>
            <person name="Barbe V."/>
            <person name="Barnay S."/>
            <person name="Blanchin S."/>
            <person name="Beckerich J.-M."/>
            <person name="Beyne E."/>
            <person name="Bleykasten C."/>
            <person name="Boisrame A."/>
            <person name="Boyer J."/>
            <person name="Cattolico L."/>
            <person name="Confanioleri F."/>
            <person name="de Daruvar A."/>
            <person name="Despons L."/>
            <person name="Fabre E."/>
            <person name="Fairhead C."/>
            <person name="Ferry-Dumazet H."/>
            <person name="Groppi A."/>
            <person name="Hantraye F."/>
            <person name="Hennequin C."/>
            <person name="Jauniaux N."/>
            <person name="Joyet P."/>
            <person name="Kachouri R."/>
            <person name="Kerrest A."/>
            <person name="Koszul R."/>
            <person name="Lemaire M."/>
            <person name="Lesur I."/>
            <person name="Ma L."/>
            <person name="Muller H."/>
            <person name="Nicaud J.-M."/>
            <person name="Nikolski M."/>
            <person name="Oztas S."/>
            <person name="Ozier-Kalogeropoulos O."/>
            <person name="Pellenz S."/>
            <person name="Potier S."/>
            <person name="Richard G.-F."/>
            <person name="Straub M.-L."/>
            <person name="Suleau A."/>
            <person name="Swennen D."/>
            <person name="Tekaia F."/>
            <person name="Wesolowski-Louvel M."/>
            <person name="Westhof E."/>
            <person name="Wirth B."/>
            <person name="Zeniou-Meyer M."/>
            <person name="Zivanovic Y."/>
            <person name="Bolotin-Fukuhara M."/>
            <person name="Thierry A."/>
            <person name="Bouchier C."/>
            <person name="Caudron B."/>
            <person name="Scarpelli C."/>
            <person name="Gaillardin C."/>
            <person name="Weissenbach J."/>
            <person name="Wincker P."/>
            <person name="Souciet J.-L."/>
        </authorList>
    </citation>
    <scope>NUCLEOTIDE SEQUENCE [LARGE SCALE GENOMIC DNA]</scope>
    <source>
        <strain>CLIB 122 / E 150</strain>
    </source>
</reference>
<keyword id="KW-0010">Activator</keyword>
<keyword id="KW-0539">Nucleus</keyword>
<keyword id="KW-1185">Reference proteome</keyword>
<keyword id="KW-0804">Transcription</keyword>
<keyword id="KW-0805">Transcription regulation</keyword>
<evidence type="ECO:0000250" key="1"/>
<evidence type="ECO:0000256" key="2">
    <source>
        <dbReference type="SAM" id="MobiDB-lite"/>
    </source>
</evidence>
<evidence type="ECO:0000305" key="3"/>
<proteinExistence type="inferred from homology"/>
<comment type="function">
    <text evidence="1">Component of the Mediator complex, a coactivator involved in the regulated transcription of nearly all RNA polymerase II-dependent genes. Mediator functions as a bridge to convey information from gene-specific regulatory proteins to the basal RNA polymerase II transcription machinery. Mediator is recruited to promoters by direct interactions with regulatory proteins and serves as a scaffold for the assembly of a functional preinitiation complex with RNA polymerase II and the general transcription factors (By similarity).</text>
</comment>
<comment type="subunit">
    <text evidence="1">Component of the Mediator complex.</text>
</comment>
<comment type="subcellular location">
    <subcellularLocation>
        <location evidence="1">Nucleus</location>
    </subcellularLocation>
</comment>
<comment type="similarity">
    <text evidence="3">Belongs to the Mediator complex subunit 19 family.</text>
</comment>
<feature type="chain" id="PRO_0000304781" description="Mediator of RNA polymerase II transcription subunit 19">
    <location>
        <begin position="1"/>
        <end position="181"/>
    </location>
</feature>
<feature type="region of interest" description="Disordered" evidence="2">
    <location>
        <begin position="120"/>
        <end position="181"/>
    </location>
</feature>
<feature type="compositionally biased region" description="Gly residues" evidence="2">
    <location>
        <begin position="122"/>
        <end position="133"/>
    </location>
</feature>
<feature type="compositionally biased region" description="Polar residues" evidence="2">
    <location>
        <begin position="143"/>
        <end position="158"/>
    </location>
</feature>
<protein>
    <recommendedName>
        <fullName>Mediator of RNA polymerase II transcription subunit 19</fullName>
    </recommendedName>
    <alternativeName>
        <fullName>Mediator complex subunit 19</fullName>
    </alternativeName>
</protein>
<name>MED19_YARLI</name>